<accession>C1FLS8</accession>
<comment type="function">
    <text evidence="1">DNA ligase that catalyzes the formation of phosphodiester linkages between 5'-phosphoryl and 3'-hydroxyl groups in double-stranded DNA using NAD as a coenzyme and as the energy source for the reaction. It is essential for DNA replication and repair of damaged DNA.</text>
</comment>
<comment type="catalytic activity">
    <reaction evidence="1">
        <text>NAD(+) + (deoxyribonucleotide)n-3'-hydroxyl + 5'-phospho-(deoxyribonucleotide)m = (deoxyribonucleotide)n+m + AMP + beta-nicotinamide D-nucleotide.</text>
        <dbReference type="EC" id="6.5.1.2"/>
    </reaction>
</comment>
<comment type="cofactor">
    <cofactor evidence="1">
        <name>Mg(2+)</name>
        <dbReference type="ChEBI" id="CHEBI:18420"/>
    </cofactor>
    <cofactor evidence="1">
        <name>Mn(2+)</name>
        <dbReference type="ChEBI" id="CHEBI:29035"/>
    </cofactor>
</comment>
<comment type="similarity">
    <text evidence="1">Belongs to the NAD-dependent DNA ligase family. LigA subfamily.</text>
</comment>
<keyword id="KW-0227">DNA damage</keyword>
<keyword id="KW-0234">DNA repair</keyword>
<keyword id="KW-0235">DNA replication</keyword>
<keyword id="KW-0436">Ligase</keyword>
<keyword id="KW-0460">Magnesium</keyword>
<keyword id="KW-0464">Manganese</keyword>
<keyword id="KW-0479">Metal-binding</keyword>
<keyword id="KW-0520">NAD</keyword>
<keyword id="KW-0862">Zinc</keyword>
<dbReference type="EC" id="6.5.1.2" evidence="1"/>
<dbReference type="EMBL" id="CP001581">
    <property type="protein sequence ID" value="ACO84729.1"/>
    <property type="molecule type" value="Genomic_DNA"/>
</dbReference>
<dbReference type="RefSeq" id="WP_012704383.1">
    <property type="nucleotide sequence ID" value="NC_012563.1"/>
</dbReference>
<dbReference type="SMR" id="C1FLS8"/>
<dbReference type="KEGG" id="cby:CLM_3704"/>
<dbReference type="eggNOG" id="COG0272">
    <property type="taxonomic scope" value="Bacteria"/>
</dbReference>
<dbReference type="HOGENOM" id="CLU_007764_2_1_9"/>
<dbReference type="Proteomes" id="UP000001374">
    <property type="component" value="Chromosome"/>
</dbReference>
<dbReference type="GO" id="GO:0005829">
    <property type="term" value="C:cytosol"/>
    <property type="evidence" value="ECO:0007669"/>
    <property type="project" value="TreeGrafter"/>
</dbReference>
<dbReference type="GO" id="GO:0003677">
    <property type="term" value="F:DNA binding"/>
    <property type="evidence" value="ECO:0007669"/>
    <property type="project" value="InterPro"/>
</dbReference>
<dbReference type="GO" id="GO:0003911">
    <property type="term" value="F:DNA ligase (NAD+) activity"/>
    <property type="evidence" value="ECO:0007669"/>
    <property type="project" value="UniProtKB-UniRule"/>
</dbReference>
<dbReference type="GO" id="GO:0046872">
    <property type="term" value="F:metal ion binding"/>
    <property type="evidence" value="ECO:0007669"/>
    <property type="project" value="UniProtKB-KW"/>
</dbReference>
<dbReference type="GO" id="GO:0006281">
    <property type="term" value="P:DNA repair"/>
    <property type="evidence" value="ECO:0007669"/>
    <property type="project" value="UniProtKB-KW"/>
</dbReference>
<dbReference type="GO" id="GO:0006260">
    <property type="term" value="P:DNA replication"/>
    <property type="evidence" value="ECO:0007669"/>
    <property type="project" value="UniProtKB-KW"/>
</dbReference>
<dbReference type="CDD" id="cd17748">
    <property type="entry name" value="BRCT_DNA_ligase_like"/>
    <property type="match status" value="1"/>
</dbReference>
<dbReference type="CDD" id="cd09897">
    <property type="entry name" value="H3TH_FEN1-XPG-like"/>
    <property type="match status" value="1"/>
</dbReference>
<dbReference type="CDD" id="cd00114">
    <property type="entry name" value="LIGANc"/>
    <property type="match status" value="1"/>
</dbReference>
<dbReference type="FunFam" id="1.10.150.20:FF:000006">
    <property type="entry name" value="DNA ligase"/>
    <property type="match status" value="1"/>
</dbReference>
<dbReference type="FunFam" id="1.10.150.20:FF:000007">
    <property type="entry name" value="DNA ligase"/>
    <property type="match status" value="1"/>
</dbReference>
<dbReference type="FunFam" id="2.40.50.140:FF:000012">
    <property type="entry name" value="DNA ligase"/>
    <property type="match status" value="1"/>
</dbReference>
<dbReference type="FunFam" id="3.30.470.30:FF:000030">
    <property type="entry name" value="DNA ligase"/>
    <property type="match status" value="1"/>
</dbReference>
<dbReference type="FunFam" id="3.40.50.10190:FF:000054">
    <property type="entry name" value="DNA ligase"/>
    <property type="match status" value="1"/>
</dbReference>
<dbReference type="Gene3D" id="1.10.150.20">
    <property type="entry name" value="5' to 3' exonuclease, C-terminal subdomain"/>
    <property type="match status" value="2"/>
</dbReference>
<dbReference type="Gene3D" id="3.40.50.10190">
    <property type="entry name" value="BRCT domain"/>
    <property type="match status" value="1"/>
</dbReference>
<dbReference type="Gene3D" id="3.30.470.30">
    <property type="entry name" value="DNA ligase/mRNA capping enzyme"/>
    <property type="match status" value="1"/>
</dbReference>
<dbReference type="Gene3D" id="1.10.287.610">
    <property type="entry name" value="Helix hairpin bin"/>
    <property type="match status" value="1"/>
</dbReference>
<dbReference type="Gene3D" id="2.40.50.140">
    <property type="entry name" value="Nucleic acid-binding proteins"/>
    <property type="match status" value="1"/>
</dbReference>
<dbReference type="HAMAP" id="MF_01588">
    <property type="entry name" value="DNA_ligase_A"/>
    <property type="match status" value="1"/>
</dbReference>
<dbReference type="InterPro" id="IPR001357">
    <property type="entry name" value="BRCT_dom"/>
</dbReference>
<dbReference type="InterPro" id="IPR036420">
    <property type="entry name" value="BRCT_dom_sf"/>
</dbReference>
<dbReference type="InterPro" id="IPR041663">
    <property type="entry name" value="DisA/LigA_HHH"/>
</dbReference>
<dbReference type="InterPro" id="IPR001679">
    <property type="entry name" value="DNA_ligase"/>
</dbReference>
<dbReference type="InterPro" id="IPR033136">
    <property type="entry name" value="DNA_ligase_CS"/>
</dbReference>
<dbReference type="InterPro" id="IPR013839">
    <property type="entry name" value="DNAligase_adenylation"/>
</dbReference>
<dbReference type="InterPro" id="IPR013840">
    <property type="entry name" value="DNAligase_N"/>
</dbReference>
<dbReference type="InterPro" id="IPR003583">
    <property type="entry name" value="Hlx-hairpin-Hlx_DNA-bd_motif"/>
</dbReference>
<dbReference type="InterPro" id="IPR012340">
    <property type="entry name" value="NA-bd_OB-fold"/>
</dbReference>
<dbReference type="InterPro" id="IPR004150">
    <property type="entry name" value="NAD_DNA_ligase_OB"/>
</dbReference>
<dbReference type="InterPro" id="IPR010994">
    <property type="entry name" value="RuvA_2-like"/>
</dbReference>
<dbReference type="NCBIfam" id="TIGR00575">
    <property type="entry name" value="dnlj"/>
    <property type="match status" value="1"/>
</dbReference>
<dbReference type="NCBIfam" id="NF005932">
    <property type="entry name" value="PRK07956.1"/>
    <property type="match status" value="1"/>
</dbReference>
<dbReference type="PANTHER" id="PTHR23389">
    <property type="entry name" value="CHROMOSOME TRANSMISSION FIDELITY FACTOR 18"/>
    <property type="match status" value="1"/>
</dbReference>
<dbReference type="PANTHER" id="PTHR23389:SF9">
    <property type="entry name" value="DNA LIGASE"/>
    <property type="match status" value="1"/>
</dbReference>
<dbReference type="Pfam" id="PF00533">
    <property type="entry name" value="BRCT"/>
    <property type="match status" value="1"/>
</dbReference>
<dbReference type="Pfam" id="PF01653">
    <property type="entry name" value="DNA_ligase_aden"/>
    <property type="match status" value="1"/>
</dbReference>
<dbReference type="Pfam" id="PF03120">
    <property type="entry name" value="DNA_ligase_OB"/>
    <property type="match status" value="1"/>
</dbReference>
<dbReference type="Pfam" id="PF12826">
    <property type="entry name" value="HHH_2"/>
    <property type="match status" value="1"/>
</dbReference>
<dbReference type="Pfam" id="PF14520">
    <property type="entry name" value="HHH_5"/>
    <property type="match status" value="1"/>
</dbReference>
<dbReference type="PIRSF" id="PIRSF001604">
    <property type="entry name" value="LigA"/>
    <property type="match status" value="1"/>
</dbReference>
<dbReference type="SMART" id="SM00292">
    <property type="entry name" value="BRCT"/>
    <property type="match status" value="1"/>
</dbReference>
<dbReference type="SMART" id="SM00278">
    <property type="entry name" value="HhH1"/>
    <property type="match status" value="4"/>
</dbReference>
<dbReference type="SMART" id="SM00532">
    <property type="entry name" value="LIGANc"/>
    <property type="match status" value="1"/>
</dbReference>
<dbReference type="SUPFAM" id="SSF52113">
    <property type="entry name" value="BRCT domain"/>
    <property type="match status" value="1"/>
</dbReference>
<dbReference type="SUPFAM" id="SSF56091">
    <property type="entry name" value="DNA ligase/mRNA capping enzyme, catalytic domain"/>
    <property type="match status" value="1"/>
</dbReference>
<dbReference type="SUPFAM" id="SSF50249">
    <property type="entry name" value="Nucleic acid-binding proteins"/>
    <property type="match status" value="1"/>
</dbReference>
<dbReference type="SUPFAM" id="SSF47781">
    <property type="entry name" value="RuvA domain 2-like"/>
    <property type="match status" value="1"/>
</dbReference>
<dbReference type="PROSITE" id="PS50172">
    <property type="entry name" value="BRCT"/>
    <property type="match status" value="1"/>
</dbReference>
<dbReference type="PROSITE" id="PS01056">
    <property type="entry name" value="DNA_LIGASE_N2"/>
    <property type="match status" value="1"/>
</dbReference>
<sequence length="664" mass="75804">MDNKLEKMKELVEELNQYAYEYYVLDNPSISDKEYDLKYDELVILEKKTEVTLPYSPTQRVGDKILGEFSKYTHKGRLWSLDKAQNMEQLIEWHNRNLKVIEQYNSMSEDKLPELRYIVTKKFDGLTVNCTYDENGILIKSATRGTGIIGEDITAQIKTIKTVPLKIKNNHVIEVHGEAIMTKTAFEEYNKAAQVPLKNLRNGAAGALRNLDIKETARRNLSAFFYDVGYNEGPEFKSYREMMNFIKNMGLPQDKYIKECTNMEEVEKEIEYIESIRGELDYDIDGAVIVVDDIKTREILGYTIKFPKWAIAYKFEAKEITTKLLDVEWNVGRSGRVTPTALLEPVELGGVTVKRATLNNMDDIKRKNVKLGAKVLVRRSNDVIPEIMGVVEESLEESEEIQAPDRCPYCNSHLVQNGVHYYCENTLSCKPQMVKSIVHFASREAMNIAGFSEKTAEQLFEKLDIKSIADLYKIKKEELLTLEKFKDKKSQNLIDAIQNSKNCDLASFIYALGIPNVGKKTANDLVMKFKTLESIKNTTIEQLVEVPDVGEIVAKSIYDFFEDEKIISNIEELLNLGVKPYYEEERIDENPFMGKTIVVTGSLNNYSRGEIKDKLQSLGAKVSSSVSKNTDYVLVGEKPGSKYEKAIELGVKVINEEEFSNKIK</sequence>
<reference key="1">
    <citation type="submission" date="2008-10" db="EMBL/GenBank/DDBJ databases">
        <title>Genome sequence of Clostridium botulinum A2 Kyoto.</title>
        <authorList>
            <person name="Shrivastava S."/>
            <person name="Brinkac L.M."/>
            <person name="Brown J.L."/>
            <person name="Bruce D."/>
            <person name="Detter C.C."/>
            <person name="Johnson E.A."/>
            <person name="Munk C.A."/>
            <person name="Smith L.A."/>
            <person name="Smith T.J."/>
            <person name="Sutton G."/>
            <person name="Brettin T.S."/>
        </authorList>
    </citation>
    <scope>NUCLEOTIDE SEQUENCE [LARGE SCALE GENOMIC DNA]</scope>
    <source>
        <strain>Kyoto / Type A2</strain>
    </source>
</reference>
<evidence type="ECO:0000255" key="1">
    <source>
        <dbReference type="HAMAP-Rule" id="MF_01588"/>
    </source>
</evidence>
<gene>
    <name evidence="1" type="primary">ligA</name>
    <name type="ordered locus">CLM_3704</name>
</gene>
<proteinExistence type="inferred from homology"/>
<organism>
    <name type="scientific">Clostridium botulinum (strain Kyoto / Type A2)</name>
    <dbReference type="NCBI Taxonomy" id="536232"/>
    <lineage>
        <taxon>Bacteria</taxon>
        <taxon>Bacillati</taxon>
        <taxon>Bacillota</taxon>
        <taxon>Clostridia</taxon>
        <taxon>Eubacteriales</taxon>
        <taxon>Clostridiaceae</taxon>
        <taxon>Clostridium</taxon>
    </lineage>
</organism>
<protein>
    <recommendedName>
        <fullName evidence="1">DNA ligase</fullName>
        <ecNumber evidence="1">6.5.1.2</ecNumber>
    </recommendedName>
    <alternativeName>
        <fullName evidence="1">Polydeoxyribonucleotide synthase [NAD(+)]</fullName>
    </alternativeName>
</protein>
<name>DNLJ_CLOBJ</name>
<feature type="chain" id="PRO_0000380342" description="DNA ligase">
    <location>
        <begin position="1"/>
        <end position="664"/>
    </location>
</feature>
<feature type="domain" description="BRCT" evidence="1">
    <location>
        <begin position="587"/>
        <end position="664"/>
    </location>
</feature>
<feature type="active site" description="N6-AMP-lysine intermediate" evidence="1">
    <location>
        <position position="122"/>
    </location>
</feature>
<feature type="binding site" evidence="1">
    <location>
        <begin position="32"/>
        <end position="36"/>
    </location>
    <ligand>
        <name>NAD(+)</name>
        <dbReference type="ChEBI" id="CHEBI:57540"/>
    </ligand>
</feature>
<feature type="binding site" evidence="1">
    <location>
        <begin position="80"/>
        <end position="81"/>
    </location>
    <ligand>
        <name>NAD(+)</name>
        <dbReference type="ChEBI" id="CHEBI:57540"/>
    </ligand>
</feature>
<feature type="binding site" evidence="1">
    <location>
        <position position="144"/>
    </location>
    <ligand>
        <name>NAD(+)</name>
        <dbReference type="ChEBI" id="CHEBI:57540"/>
    </ligand>
</feature>
<feature type="binding site" evidence="1">
    <location>
        <position position="178"/>
    </location>
    <ligand>
        <name>NAD(+)</name>
        <dbReference type="ChEBI" id="CHEBI:57540"/>
    </ligand>
</feature>
<feature type="binding site" evidence="1">
    <location>
        <position position="314"/>
    </location>
    <ligand>
        <name>NAD(+)</name>
        <dbReference type="ChEBI" id="CHEBI:57540"/>
    </ligand>
</feature>
<feature type="binding site" evidence="1">
    <location>
        <position position="407"/>
    </location>
    <ligand>
        <name>Zn(2+)</name>
        <dbReference type="ChEBI" id="CHEBI:29105"/>
    </ligand>
</feature>
<feature type="binding site" evidence="1">
    <location>
        <position position="410"/>
    </location>
    <ligand>
        <name>Zn(2+)</name>
        <dbReference type="ChEBI" id="CHEBI:29105"/>
    </ligand>
</feature>
<feature type="binding site" evidence="1">
    <location>
        <position position="423"/>
    </location>
    <ligand>
        <name>Zn(2+)</name>
        <dbReference type="ChEBI" id="CHEBI:29105"/>
    </ligand>
</feature>
<feature type="binding site" evidence="1">
    <location>
        <position position="429"/>
    </location>
    <ligand>
        <name>Zn(2+)</name>
        <dbReference type="ChEBI" id="CHEBI:29105"/>
    </ligand>
</feature>